<feature type="signal peptide" evidence="5">
    <location>
        <begin position="1"/>
        <end position="18"/>
    </location>
</feature>
<feature type="propeptide" id="PRO_0000026376" description="Activation peptide" evidence="5 6 7">
    <location>
        <begin position="19"/>
        <end position="98"/>
    </location>
</feature>
<feature type="chain" id="PRO_0000026377" description="Peptidase 1">
    <location>
        <begin position="99"/>
        <end position="320"/>
    </location>
</feature>
<feature type="active site" evidence="1">
    <location>
        <position position="132"/>
    </location>
</feature>
<feature type="active site" evidence="1">
    <location>
        <position position="268"/>
    </location>
</feature>
<feature type="active site" evidence="1">
    <location>
        <position position="288"/>
    </location>
</feature>
<feature type="glycosylation site" description="N-linked (GlcNAc...) asparagine" evidence="5">
    <location>
        <position position="150"/>
    </location>
</feature>
<feature type="disulfide bond">
    <location>
        <begin position="102"/>
        <end position="215"/>
    </location>
</feature>
<feature type="disulfide bond">
    <location>
        <begin position="129"/>
        <end position="169"/>
    </location>
</feature>
<feature type="disulfide bond">
    <location>
        <begin position="163"/>
        <end position="201"/>
    </location>
</feature>
<feature type="sequence variant">
    <original>Y</original>
    <variation>H</variation>
    <location>
        <position position="148"/>
    </location>
</feature>
<feature type="sequence variant">
    <original>E</original>
    <variation>K</variation>
    <location>
        <position position="179"/>
    </location>
</feature>
<feature type="sequence variant" evidence="6">
    <original>V</original>
    <variation>A</variation>
    <location>
        <position position="222"/>
    </location>
</feature>
<feature type="sequence variant">
    <original>S</original>
    <variation>T</variation>
    <location>
        <position position="234"/>
    </location>
</feature>
<feature type="sequence variant">
    <original>E</original>
    <variation>Q</variation>
    <location>
        <position position="313"/>
    </location>
</feature>
<feature type="mutagenesis site" description="Loss of activity.">
    <original>C</original>
    <variation>A</variation>
    <location>
        <position position="132"/>
    </location>
</feature>
<feature type="mutagenesis site" description="Loss of N-glycosylation.">
    <original>N</original>
    <variation>E</variation>
    <location>
        <position position="150"/>
    </location>
</feature>
<feature type="helix" evidence="9">
    <location>
        <begin position="26"/>
        <end position="32"/>
    </location>
</feature>
<feature type="helix" evidence="9">
    <location>
        <begin position="40"/>
        <end position="60"/>
    </location>
</feature>
<feature type="turn" evidence="9">
    <location>
        <begin position="66"/>
        <end position="69"/>
    </location>
</feature>
<feature type="helix" evidence="9">
    <location>
        <begin position="72"/>
        <end position="79"/>
    </location>
</feature>
<feature type="helix" evidence="9">
    <location>
        <begin position="83"/>
        <end position="93"/>
    </location>
</feature>
<feature type="turn" evidence="9">
    <location>
        <begin position="114"/>
        <end position="118"/>
    </location>
</feature>
<feature type="strand" evidence="9">
    <location>
        <begin position="128"/>
        <end position="130"/>
    </location>
</feature>
<feature type="helix" evidence="9">
    <location>
        <begin position="132"/>
        <end position="149"/>
    </location>
</feature>
<feature type="helix" evidence="9">
    <location>
        <begin position="157"/>
        <end position="163"/>
    </location>
</feature>
<feature type="helix" evidence="9">
    <location>
        <begin position="174"/>
        <end position="184"/>
    </location>
</feature>
<feature type="strand" evidence="9">
    <location>
        <begin position="186"/>
        <end position="188"/>
    </location>
</feature>
<feature type="helix" evidence="9">
    <location>
        <begin position="189"/>
        <end position="191"/>
    </location>
</feature>
<feature type="strand" evidence="9">
    <location>
        <begin position="212"/>
        <end position="216"/>
    </location>
</feature>
<feature type="helix" evidence="9">
    <location>
        <begin position="222"/>
        <end position="232"/>
    </location>
</feature>
<feature type="strand" evidence="9">
    <location>
        <begin position="236"/>
        <end position="243"/>
    </location>
</feature>
<feature type="helix" evidence="9">
    <location>
        <begin position="245"/>
        <end position="249"/>
    </location>
</feature>
<feature type="strand" evidence="9">
    <location>
        <begin position="253"/>
        <end position="255"/>
    </location>
</feature>
<feature type="strand" evidence="9">
    <location>
        <begin position="266"/>
        <end position="278"/>
    </location>
</feature>
<feature type="strand" evidence="9">
    <location>
        <begin position="281"/>
        <end position="287"/>
    </location>
</feature>
<feature type="turn" evidence="10">
    <location>
        <begin position="292"/>
        <end position="295"/>
    </location>
</feature>
<feature type="strand" evidence="9">
    <location>
        <begin position="299"/>
        <end position="303"/>
    </location>
</feature>
<feature type="helix" evidence="9">
    <location>
        <begin position="308"/>
        <end position="310"/>
    </location>
</feature>
<feature type="turn" evidence="9">
    <location>
        <begin position="311"/>
        <end position="313"/>
    </location>
</feature>
<feature type="strand" evidence="9">
    <location>
        <begin position="316"/>
        <end position="319"/>
    </location>
</feature>
<organism>
    <name type="scientific">Dermatophagoides pteronyssinus</name>
    <name type="common">European house dust mite</name>
    <dbReference type="NCBI Taxonomy" id="6956"/>
    <lineage>
        <taxon>Eukaryota</taxon>
        <taxon>Metazoa</taxon>
        <taxon>Ecdysozoa</taxon>
        <taxon>Arthropoda</taxon>
        <taxon>Chelicerata</taxon>
        <taxon>Arachnida</taxon>
        <taxon>Acari</taxon>
        <taxon>Acariformes</taxon>
        <taxon>Sarcoptiformes</taxon>
        <taxon>Astigmata</taxon>
        <taxon>Psoroptidia</taxon>
        <taxon>Analgoidea</taxon>
        <taxon>Pyroglyphidae</taxon>
        <taxon>Dermatophagoidinae</taxon>
        <taxon>Dermatophagoides</taxon>
    </lineage>
</organism>
<keyword id="KW-0002">3D-structure</keyword>
<keyword id="KW-0020">Allergen</keyword>
<keyword id="KW-0903">Direct protein sequencing</keyword>
<keyword id="KW-1015">Disulfide bond</keyword>
<keyword id="KW-0325">Glycoprotein</keyword>
<keyword id="KW-0378">Hydrolase</keyword>
<keyword id="KW-0645">Protease</keyword>
<keyword id="KW-1185">Reference proteome</keyword>
<keyword id="KW-0964">Secreted</keyword>
<keyword id="KW-0732">Signal</keyword>
<keyword id="KW-0788">Thiol protease</keyword>
<keyword id="KW-0865">Zymogen</keyword>
<comment type="function">
    <text>Thiol protease, with a preference for substrates with a large hydrophobic side chain in the P2 position, or with basic residues.</text>
</comment>
<comment type="catalytic activity">
    <reaction>
        <text>Broad endopeptidase specificity.</text>
        <dbReference type="EC" id="3.4.22.65"/>
    </reaction>
</comment>
<comment type="subcellular location">
    <subcellularLocation>
        <location>Secreted</location>
    </subcellularLocation>
</comment>
<comment type="PTM">
    <text evidence="5">N-glycosylated. N-glycanase treatment does not completely remove carbohydrates, suggesting that the protein contains additional glycosylation sites.</text>
</comment>
<comment type="allergen">
    <text>Causes an allergic reaction in human. Common symptoms of mite allergy are bronchial asthma, allergic rhinitis and conjunctivitis. Binds to IgE in 80% of patients with house dust allergy.</text>
</comment>
<comment type="similarity">
    <text evidence="2 3 4">Belongs to the peptidase C1 family.</text>
</comment>
<comment type="sequence caution" evidence="8">
    <conflict type="erroneous initiation">
        <sequence resource="EMBL-CDS" id="AAA28296"/>
    </conflict>
</comment>
<dbReference type="EC" id="3.4.22.65"/>
<dbReference type="EMBL" id="U11695">
    <property type="protein sequence ID" value="AAB60215.1"/>
    <property type="molecule type" value="mRNA"/>
</dbReference>
<dbReference type="EMBL" id="M24794">
    <property type="protein sequence ID" value="AAA28296.1"/>
    <property type="status" value="ALT_INIT"/>
    <property type="molecule type" value="mRNA"/>
</dbReference>
<dbReference type="EMBL" id="X65197">
    <property type="protein sequence ID" value="CAA46317.1"/>
    <property type="molecule type" value="Genomic_DNA"/>
</dbReference>
<dbReference type="PIR" id="JQ0337">
    <property type="entry name" value="JQ0337"/>
</dbReference>
<dbReference type="PDB" id="1XKG">
    <property type="method" value="X-ray"/>
    <property type="resolution" value="1.61 A"/>
    <property type="chains" value="A=19-320"/>
</dbReference>
<dbReference type="PDB" id="2AS8">
    <property type="method" value="X-ray"/>
    <property type="resolution" value="1.95 A"/>
    <property type="chains" value="A/B=99-320"/>
</dbReference>
<dbReference type="PDB" id="5VCN">
    <property type="method" value="X-ray"/>
    <property type="resolution" value="3.00 A"/>
    <property type="chains" value="A/B=99-320"/>
</dbReference>
<dbReference type="PDB" id="5VCO">
    <property type="method" value="X-ray"/>
    <property type="resolution" value="2.74 A"/>
    <property type="chains" value="E/F=99-320"/>
</dbReference>
<dbReference type="PDB" id="5VPG">
    <property type="method" value="X-ray"/>
    <property type="resolution" value="1.95 A"/>
    <property type="chains" value="A=99-320"/>
</dbReference>
<dbReference type="PDB" id="5VPH">
    <property type="method" value="X-ray"/>
    <property type="resolution" value="2.50 A"/>
    <property type="chains" value="A=99-320"/>
</dbReference>
<dbReference type="PDBsum" id="1XKG"/>
<dbReference type="PDBsum" id="2AS8"/>
<dbReference type="PDBsum" id="5VCN"/>
<dbReference type="PDBsum" id="5VCO"/>
<dbReference type="PDBsum" id="5VPG"/>
<dbReference type="PDBsum" id="5VPH"/>
<dbReference type="SMR" id="P08176"/>
<dbReference type="BindingDB" id="P08176"/>
<dbReference type="ChEMBL" id="CHEMBL3351204"/>
<dbReference type="Allergome" id="1232">
    <property type="allergen name" value="Der p 1.0111"/>
</dbReference>
<dbReference type="Allergome" id="310">
    <property type="allergen name" value="Der p 1"/>
</dbReference>
<dbReference type="MEROPS" id="C01.073"/>
<dbReference type="GlyCosmos" id="P08176">
    <property type="glycosylation" value="1 site, No reported glycans"/>
</dbReference>
<dbReference type="iPTMnet" id="P08176"/>
<dbReference type="ABCD" id="P08176">
    <property type="antibodies" value="6 sequenced antibodies"/>
</dbReference>
<dbReference type="InParanoid" id="P08176"/>
<dbReference type="OrthoDB" id="6484923at2759"/>
<dbReference type="BRENDA" id="3.4.22.65">
    <property type="organism ID" value="1873"/>
</dbReference>
<dbReference type="EvolutionaryTrace" id="P08176"/>
<dbReference type="Proteomes" id="UP000515146">
    <property type="component" value="Unplaced"/>
</dbReference>
<dbReference type="GO" id="GO:0005576">
    <property type="term" value="C:extracellular region"/>
    <property type="evidence" value="ECO:0007669"/>
    <property type="project" value="UniProtKB-SubCell"/>
</dbReference>
<dbReference type="GO" id="GO:0008234">
    <property type="term" value="F:cysteine-type peptidase activity"/>
    <property type="evidence" value="ECO:0007669"/>
    <property type="project" value="UniProtKB-KW"/>
</dbReference>
<dbReference type="GO" id="GO:0006508">
    <property type="term" value="P:proteolysis"/>
    <property type="evidence" value="ECO:0007669"/>
    <property type="project" value="UniProtKB-KW"/>
</dbReference>
<dbReference type="CDD" id="cd02248">
    <property type="entry name" value="Peptidase_C1A"/>
    <property type="match status" value="1"/>
</dbReference>
<dbReference type="Gene3D" id="3.90.70.10">
    <property type="entry name" value="Cysteine proteinases"/>
    <property type="match status" value="1"/>
</dbReference>
<dbReference type="InterPro" id="IPR038765">
    <property type="entry name" value="Papain-like_cys_pep_sf"/>
</dbReference>
<dbReference type="InterPro" id="IPR025661">
    <property type="entry name" value="Pept_asp_AS"/>
</dbReference>
<dbReference type="InterPro" id="IPR000169">
    <property type="entry name" value="Pept_cys_AS"/>
</dbReference>
<dbReference type="InterPro" id="IPR025660">
    <property type="entry name" value="Pept_his_AS"/>
</dbReference>
<dbReference type="InterPro" id="IPR013128">
    <property type="entry name" value="Peptidase_C1A"/>
</dbReference>
<dbReference type="InterPro" id="IPR000668">
    <property type="entry name" value="Peptidase_C1A_C"/>
</dbReference>
<dbReference type="InterPro" id="IPR039417">
    <property type="entry name" value="Peptidase_C1A_papain-like"/>
</dbReference>
<dbReference type="InterPro" id="IPR013201">
    <property type="entry name" value="Prot_inhib_I29"/>
</dbReference>
<dbReference type="PANTHER" id="PTHR12411">
    <property type="entry name" value="CYSTEINE PROTEASE FAMILY C1-RELATED"/>
    <property type="match status" value="1"/>
</dbReference>
<dbReference type="Pfam" id="PF00112">
    <property type="entry name" value="Peptidase_C1"/>
    <property type="match status" value="1"/>
</dbReference>
<dbReference type="PRINTS" id="PR00705">
    <property type="entry name" value="PAPAIN"/>
</dbReference>
<dbReference type="SMART" id="SM00848">
    <property type="entry name" value="Inhibitor_I29"/>
    <property type="match status" value="1"/>
</dbReference>
<dbReference type="SMART" id="SM00645">
    <property type="entry name" value="Pept_C1"/>
    <property type="match status" value="1"/>
</dbReference>
<dbReference type="SUPFAM" id="SSF54001">
    <property type="entry name" value="Cysteine proteinases"/>
    <property type="match status" value="1"/>
</dbReference>
<dbReference type="PROSITE" id="PS00640">
    <property type="entry name" value="THIOL_PROTEASE_ASN"/>
    <property type="match status" value="1"/>
</dbReference>
<dbReference type="PROSITE" id="PS00139">
    <property type="entry name" value="THIOL_PROTEASE_CYS"/>
    <property type="match status" value="1"/>
</dbReference>
<dbReference type="PROSITE" id="PS00639">
    <property type="entry name" value="THIOL_PROTEASE_HIS"/>
    <property type="match status" value="1"/>
</dbReference>
<sequence length="320" mass="36104">MKIVLAIASLLALSAVYARPSSIKTFEEYKKAFNKSYATFEDEEAARKNFLESVKYVQSNGGAINHLSDLSLDEFKNRFLMSAEAFEHLKTQFDLNAETNACSINGNAPAEIDLRQMRTVTPIRMQGGCGSCWAFSGVAATESAYLAYRNQSLDLAEQELVDCASQHGCHGDTIPRGIEYIQHNGVVQESYYRYVAREQSCRRPNAQRFGISNYCQIYPPNVNKIREALAQTHSAIAVIIGIKDLDAFRHYDGRTIIQRDNGYQPNYHAVNIVGYSNAQGVDYWIVRNSWDTNWGDNGYGYFAANIDLMMIEEYPYVVIL</sequence>
<name>PEPT1_DERPT</name>
<reference key="1">
    <citation type="journal article" date="1993" name="Int. Arch. Allergy Immunol.">
        <title>Sequence polymorphisms of cDNA clones encoding the mite allergen Der p I.</title>
        <authorList>
            <person name="Chua K.Y."/>
            <person name="Kehal P.K."/>
            <person name="Thomas W.R."/>
        </authorList>
    </citation>
    <scope>NUCLEOTIDE SEQUENCE [MRNA]</scope>
    <scope>POLYMORPHISM</scope>
</reference>
<reference key="2">
    <citation type="journal article" date="1988" name="J. Exp. Med.">
        <title>Sequence analysis of cDNA coding for a major house dust mite allergen, Der p 1. Homology with cysteine proteases.</title>
        <authorList>
            <person name="Chua K.Y."/>
            <person name="Stewart G.A."/>
            <person name="Thomas W.R."/>
            <person name="Simpson R.J."/>
            <person name="Dilworth R.J."/>
            <person name="Plozza T.M."/>
            <person name="Turner K.J."/>
        </authorList>
    </citation>
    <scope>NUCLEOTIDE SEQUENCE [MRNA] OF 76-320</scope>
</reference>
<reference key="3">
    <citation type="journal article" date="1988" name="Int. Arch. Allergy Appl. Immunol.">
        <title>Cloning and expression of DNA coding for the major house dust mite allergen Der p 1 in Escherichia coli.</title>
        <authorList>
            <person name="Thomas W.R."/>
            <person name="Stewart G.A."/>
            <person name="Simpson R.J."/>
            <person name="Chua K.Y."/>
            <person name="Plozza T.M."/>
            <person name="Dilworth R.J."/>
            <person name="Nisbet A."/>
            <person name="Turner K.J."/>
        </authorList>
    </citation>
    <scope>NUCLEOTIDE SEQUENCE OF 81-176</scope>
</reference>
<reference key="4">
    <citation type="journal article" date="1991" name="Clin. Exp. Allergy">
        <title>Sequence analysis of cDNA coding for a major house dust mite allergen, Der f I.</title>
        <authorList>
            <person name="Dilworth R.J."/>
            <person name="Chua K.Y."/>
            <person name="Thomas W.R."/>
        </authorList>
    </citation>
    <scope>SEQUENCE REVISION TO 232-241</scope>
</reference>
<reference key="5">
    <citation type="journal article" date="1992" name="Int. Arch. Allergy Immunol.">
        <title>Molecular characterisation of group I allergen Eur m I from house dust mite Euroglyphus maynei.</title>
        <authorList>
            <person name="Kent N.A."/>
            <person name="Hill M.R."/>
            <person name="Keen J.N."/>
            <person name="Holland P.W."/>
            <person name="Hart B.J."/>
        </authorList>
    </citation>
    <scope>NUCLEOTIDE SEQUENCE [GENOMIC DNA] OF 99-308</scope>
</reference>
<reference key="6">
    <citation type="journal article" date="1988" name="J. Immunol.">
        <title>The binding of mouse hybridoma and human IgE antibodies to the major fecal allergen, Der p I, of Dermatophagoides pteronyssinus. Relative binding site location and species specificity studied by solid-phase inhibition assays with radiolabeled antigen.</title>
        <authorList>
            <person name="Lind P."/>
            <person name="Hansen O.C."/>
            <person name="Horn N."/>
        </authorList>
    </citation>
    <scope>PROTEIN SEQUENCE OF 99-127</scope>
</reference>
<reference key="7">
    <citation type="journal article" date="1989" name="Protein Seq. Data Anal.">
        <title>Structural studies on the allergen Der p1 from the house dust mite Dermatophagoides pteronyssinus: similarity with cysteine proteinases.</title>
        <authorList>
            <person name="Simpson R.J."/>
            <person name="Nice E.C."/>
            <person name="Moritz R.L."/>
            <person name="Stewart G.A."/>
        </authorList>
    </citation>
    <scope>PROTEIN SEQUENCE OF 99-139; 177-192; 208-224 AND 260-277</scope>
    <scope>VARIANT ALA-222</scope>
</reference>
<reference key="8">
    <citation type="journal article" date="1994" name="Protein Eng.">
        <title>Comparative modelling of major house dust mite allergen Der p I: structure validation using an extended environmental amino acid propensity table.</title>
        <authorList>
            <person name="Topham C.M."/>
            <person name="Srinivasan N."/>
            <person name="Thorpe C.J."/>
            <person name="Overington J.P."/>
            <person name="Kalsheker N.A."/>
        </authorList>
    </citation>
    <scope>3D-STRUCTURE MODELING</scope>
</reference>
<reference key="9">
    <citation type="journal article" date="2005" name="J. Immunol.">
        <title>The crystal structure of recombinant proDer p 1, a major house dust mite proteolytic allergen.</title>
        <authorList>
            <person name="Meno K."/>
            <person name="Thorsted P.B."/>
            <person name="Ipsen H."/>
            <person name="Kristensen O."/>
            <person name="Larsen J.N."/>
            <person name="Spangfort M.D."/>
            <person name="Gajhede M."/>
            <person name="Lund K."/>
        </authorList>
    </citation>
    <scope>X-RAY CRYSTALLOGRAPHY (1.61 ANGSTROMS) OF 22-320 OF MUTANT ALA-132/GLU-150</scope>
    <scope>PROTEIN SEQUENCE OF N-TERMINUS</scope>
    <scope>GLYCOSYLATION AT ASN-150</scope>
</reference>
<gene>
    <name type="primary">DERP1</name>
</gene>
<accession>P08176</accession>
<accession>Q24616</accession>
<evidence type="ECO:0000250" key="1"/>
<evidence type="ECO:0000255" key="2">
    <source>
        <dbReference type="PROSITE-ProRule" id="PRU10088"/>
    </source>
</evidence>
<evidence type="ECO:0000255" key="3">
    <source>
        <dbReference type="PROSITE-ProRule" id="PRU10089"/>
    </source>
</evidence>
<evidence type="ECO:0000255" key="4">
    <source>
        <dbReference type="PROSITE-ProRule" id="PRU10090"/>
    </source>
</evidence>
<evidence type="ECO:0000269" key="5">
    <source>
    </source>
</evidence>
<evidence type="ECO:0000269" key="6">
    <source>
    </source>
</evidence>
<evidence type="ECO:0000269" key="7">
    <source>
    </source>
</evidence>
<evidence type="ECO:0000305" key="8"/>
<evidence type="ECO:0007829" key="9">
    <source>
        <dbReference type="PDB" id="1XKG"/>
    </source>
</evidence>
<evidence type="ECO:0007829" key="10">
    <source>
        <dbReference type="PDB" id="5VCO"/>
    </source>
</evidence>
<protein>
    <recommendedName>
        <fullName>Peptidase 1</fullName>
        <ecNumber>3.4.22.65</ecNumber>
    </recommendedName>
    <alternativeName>
        <fullName>Allergen Der p I</fullName>
    </alternativeName>
    <alternativeName>
        <fullName>Major mite fecal allergen Der p 1</fullName>
    </alternativeName>
    <allergenName>Der p 1</allergenName>
</protein>
<proteinExistence type="evidence at protein level"/>